<reference key="1">
    <citation type="journal article" date="2005" name="Arch. Microbiol.">
        <title>The genome sequence of an anaerobic aromatic-degrading denitrifying bacterium, strain EbN1.</title>
        <authorList>
            <person name="Rabus R."/>
            <person name="Kube M."/>
            <person name="Heider J."/>
            <person name="Beck A."/>
            <person name="Heitmann K."/>
            <person name="Widdel F."/>
            <person name="Reinhardt R."/>
        </authorList>
    </citation>
    <scope>NUCLEOTIDE SEQUENCE [LARGE SCALE GENOMIC DNA]</scope>
    <source>
        <strain>DSM 19018 / LMG 30748 / EbN1</strain>
    </source>
</reference>
<dbReference type="EC" id="3.5.2.7" evidence="1"/>
<dbReference type="EMBL" id="CR555306">
    <property type="protein sequence ID" value="CAI09384.1"/>
    <property type="molecule type" value="Genomic_DNA"/>
</dbReference>
<dbReference type="RefSeq" id="WP_011239049.1">
    <property type="nucleotide sequence ID" value="NC_006513.1"/>
</dbReference>
<dbReference type="SMR" id="Q5NZY0"/>
<dbReference type="STRING" id="76114.ebA5740"/>
<dbReference type="KEGG" id="eba:ebA5740"/>
<dbReference type="eggNOG" id="COG1228">
    <property type="taxonomic scope" value="Bacteria"/>
</dbReference>
<dbReference type="HOGENOM" id="CLU_041647_0_0_4"/>
<dbReference type="OrthoDB" id="9807210at2"/>
<dbReference type="UniPathway" id="UPA00379">
    <property type="reaction ID" value="UER00551"/>
</dbReference>
<dbReference type="Proteomes" id="UP000006552">
    <property type="component" value="Chromosome"/>
</dbReference>
<dbReference type="GO" id="GO:0005737">
    <property type="term" value="C:cytoplasm"/>
    <property type="evidence" value="ECO:0007669"/>
    <property type="project" value="UniProtKB-SubCell"/>
</dbReference>
<dbReference type="GO" id="GO:0050480">
    <property type="term" value="F:imidazolonepropionase activity"/>
    <property type="evidence" value="ECO:0007669"/>
    <property type="project" value="UniProtKB-UniRule"/>
</dbReference>
<dbReference type="GO" id="GO:0005506">
    <property type="term" value="F:iron ion binding"/>
    <property type="evidence" value="ECO:0007669"/>
    <property type="project" value="UniProtKB-UniRule"/>
</dbReference>
<dbReference type="GO" id="GO:0008270">
    <property type="term" value="F:zinc ion binding"/>
    <property type="evidence" value="ECO:0007669"/>
    <property type="project" value="UniProtKB-UniRule"/>
</dbReference>
<dbReference type="GO" id="GO:0019556">
    <property type="term" value="P:L-histidine catabolic process to glutamate and formamide"/>
    <property type="evidence" value="ECO:0007669"/>
    <property type="project" value="UniProtKB-UniPathway"/>
</dbReference>
<dbReference type="GO" id="GO:0019557">
    <property type="term" value="P:L-histidine catabolic process to glutamate and formate"/>
    <property type="evidence" value="ECO:0007669"/>
    <property type="project" value="UniProtKB-UniPathway"/>
</dbReference>
<dbReference type="FunFam" id="3.20.20.140:FF:000007">
    <property type="entry name" value="Imidazolonepropionase"/>
    <property type="match status" value="1"/>
</dbReference>
<dbReference type="Gene3D" id="3.20.20.140">
    <property type="entry name" value="Metal-dependent hydrolases"/>
    <property type="match status" value="1"/>
</dbReference>
<dbReference type="Gene3D" id="2.30.40.10">
    <property type="entry name" value="Urease, subunit C, domain 1"/>
    <property type="match status" value="1"/>
</dbReference>
<dbReference type="HAMAP" id="MF_00372">
    <property type="entry name" value="HutI"/>
    <property type="match status" value="1"/>
</dbReference>
<dbReference type="InterPro" id="IPR006680">
    <property type="entry name" value="Amidohydro-rel"/>
</dbReference>
<dbReference type="InterPro" id="IPR005920">
    <property type="entry name" value="HutI"/>
</dbReference>
<dbReference type="InterPro" id="IPR011059">
    <property type="entry name" value="Metal-dep_hydrolase_composite"/>
</dbReference>
<dbReference type="InterPro" id="IPR032466">
    <property type="entry name" value="Metal_Hydrolase"/>
</dbReference>
<dbReference type="NCBIfam" id="TIGR01224">
    <property type="entry name" value="hutI"/>
    <property type="match status" value="1"/>
</dbReference>
<dbReference type="PANTHER" id="PTHR42752">
    <property type="entry name" value="IMIDAZOLONEPROPIONASE"/>
    <property type="match status" value="1"/>
</dbReference>
<dbReference type="PANTHER" id="PTHR42752:SF1">
    <property type="entry name" value="IMIDAZOLONEPROPIONASE-RELATED"/>
    <property type="match status" value="1"/>
</dbReference>
<dbReference type="Pfam" id="PF01979">
    <property type="entry name" value="Amidohydro_1"/>
    <property type="match status" value="1"/>
</dbReference>
<dbReference type="SUPFAM" id="SSF51338">
    <property type="entry name" value="Composite domain of metallo-dependent hydrolases"/>
    <property type="match status" value="1"/>
</dbReference>
<dbReference type="SUPFAM" id="SSF51556">
    <property type="entry name" value="Metallo-dependent hydrolases"/>
    <property type="match status" value="1"/>
</dbReference>
<proteinExistence type="inferred from homology"/>
<sequence length="412" mass="43320">MAAWDLLFRRVHLATFAGDEPYGALRDGALAVRTGRIEWLGAERDLPREARAAQEIDGAGGWLLPGLIDCHTHLVHAGNRAREFELRMQGANYEEIARAGGGIRVTVIATRAADEAALVVASRPRLARLIAEGVTTVEIKSGYGLELSAERRMLRAARALGDTAPVRVTTTFLGAHALPPEYDGRADDYIAEVCDVMLPALYREGLVDAVDAFCERIAFSPAQTEAVFRAARALGLPVRLHAEQLSDSGGAALAARYGALCADHLEHLSEAGAAALAAAGSVAVLLPGAFYFLRETHLPPAARLRALGVPVAIATDCNPGTSPLSSLLLALNMACVLFRLSPAAALAGVTRNAARALGRGDDLGTLEAGKLADLGLWNVDTPAELCYHLGYNPLALRVFGGQISGAGDVAQG</sequence>
<comment type="function">
    <text evidence="1">Catalyzes the hydrolytic cleavage of the carbon-nitrogen bond in imidazolone-5-propanoate to yield N-formimidoyl-L-glutamate. It is the third step in the universal histidine degradation pathway.</text>
</comment>
<comment type="catalytic activity">
    <reaction evidence="1">
        <text>4-imidazolone-5-propanoate + H2O = N-formimidoyl-L-glutamate</text>
        <dbReference type="Rhea" id="RHEA:23660"/>
        <dbReference type="ChEBI" id="CHEBI:15377"/>
        <dbReference type="ChEBI" id="CHEBI:58928"/>
        <dbReference type="ChEBI" id="CHEBI:77893"/>
        <dbReference type="EC" id="3.5.2.7"/>
    </reaction>
</comment>
<comment type="cofactor">
    <cofactor evidence="1">
        <name>Zn(2+)</name>
        <dbReference type="ChEBI" id="CHEBI:29105"/>
    </cofactor>
    <cofactor evidence="1">
        <name>Fe(3+)</name>
        <dbReference type="ChEBI" id="CHEBI:29034"/>
    </cofactor>
    <text evidence="1">Binds 1 zinc or iron ion per subunit.</text>
</comment>
<comment type="pathway">
    <text evidence="1">Amino-acid degradation; L-histidine degradation into L-glutamate; N-formimidoyl-L-glutamate from L-histidine: step 3/3.</text>
</comment>
<comment type="subcellular location">
    <subcellularLocation>
        <location evidence="1">Cytoplasm</location>
    </subcellularLocation>
</comment>
<comment type="similarity">
    <text evidence="1">Belongs to the metallo-dependent hydrolases superfamily. HutI family.</text>
</comment>
<keyword id="KW-0963">Cytoplasm</keyword>
<keyword id="KW-0369">Histidine metabolism</keyword>
<keyword id="KW-0378">Hydrolase</keyword>
<keyword id="KW-0408">Iron</keyword>
<keyword id="KW-0479">Metal-binding</keyword>
<keyword id="KW-1185">Reference proteome</keyword>
<keyword id="KW-0862">Zinc</keyword>
<gene>
    <name evidence="1" type="primary">hutI</name>
    <name type="ordered locus">AZOSEA32590</name>
    <name type="ORF">ebA5740</name>
</gene>
<evidence type="ECO:0000255" key="1">
    <source>
        <dbReference type="HAMAP-Rule" id="MF_00372"/>
    </source>
</evidence>
<protein>
    <recommendedName>
        <fullName evidence="1">Imidazolonepropionase</fullName>
        <ecNumber evidence="1">3.5.2.7</ecNumber>
    </recommendedName>
    <alternativeName>
        <fullName evidence="1">Imidazolone-5-propionate hydrolase</fullName>
    </alternativeName>
</protein>
<accession>Q5NZY0</accession>
<feature type="chain" id="PRO_0000306427" description="Imidazolonepropionase">
    <location>
        <begin position="1"/>
        <end position="412"/>
    </location>
</feature>
<feature type="binding site" evidence="1">
    <location>
        <position position="71"/>
    </location>
    <ligand>
        <name>Fe(3+)</name>
        <dbReference type="ChEBI" id="CHEBI:29034"/>
    </ligand>
</feature>
<feature type="binding site" evidence="1">
    <location>
        <position position="71"/>
    </location>
    <ligand>
        <name>Zn(2+)</name>
        <dbReference type="ChEBI" id="CHEBI:29105"/>
    </ligand>
</feature>
<feature type="binding site" evidence="1">
    <location>
        <position position="73"/>
    </location>
    <ligand>
        <name>Fe(3+)</name>
        <dbReference type="ChEBI" id="CHEBI:29034"/>
    </ligand>
</feature>
<feature type="binding site" evidence="1">
    <location>
        <position position="73"/>
    </location>
    <ligand>
        <name>Zn(2+)</name>
        <dbReference type="ChEBI" id="CHEBI:29105"/>
    </ligand>
</feature>
<feature type="binding site" evidence="1">
    <location>
        <position position="80"/>
    </location>
    <ligand>
        <name>4-imidazolone-5-propanoate</name>
        <dbReference type="ChEBI" id="CHEBI:77893"/>
    </ligand>
</feature>
<feature type="binding site" evidence="1">
    <location>
        <position position="143"/>
    </location>
    <ligand>
        <name>4-imidazolone-5-propanoate</name>
        <dbReference type="ChEBI" id="CHEBI:77893"/>
    </ligand>
</feature>
<feature type="binding site" evidence="1">
    <location>
        <position position="143"/>
    </location>
    <ligand>
        <name>N-formimidoyl-L-glutamate</name>
        <dbReference type="ChEBI" id="CHEBI:58928"/>
    </ligand>
</feature>
<feature type="binding site" evidence="1">
    <location>
        <position position="176"/>
    </location>
    <ligand>
        <name>4-imidazolone-5-propanoate</name>
        <dbReference type="ChEBI" id="CHEBI:77893"/>
    </ligand>
</feature>
<feature type="binding site" evidence="1">
    <location>
        <position position="241"/>
    </location>
    <ligand>
        <name>Fe(3+)</name>
        <dbReference type="ChEBI" id="CHEBI:29034"/>
    </ligand>
</feature>
<feature type="binding site" evidence="1">
    <location>
        <position position="241"/>
    </location>
    <ligand>
        <name>Zn(2+)</name>
        <dbReference type="ChEBI" id="CHEBI:29105"/>
    </ligand>
</feature>
<feature type="binding site" evidence="1">
    <location>
        <position position="244"/>
    </location>
    <ligand>
        <name>4-imidazolone-5-propanoate</name>
        <dbReference type="ChEBI" id="CHEBI:77893"/>
    </ligand>
</feature>
<feature type="binding site" evidence="1">
    <location>
        <position position="316"/>
    </location>
    <ligand>
        <name>Fe(3+)</name>
        <dbReference type="ChEBI" id="CHEBI:29034"/>
    </ligand>
</feature>
<feature type="binding site" evidence="1">
    <location>
        <position position="316"/>
    </location>
    <ligand>
        <name>Zn(2+)</name>
        <dbReference type="ChEBI" id="CHEBI:29105"/>
    </ligand>
</feature>
<feature type="binding site" evidence="1">
    <location>
        <position position="318"/>
    </location>
    <ligand>
        <name>N-formimidoyl-L-glutamate</name>
        <dbReference type="ChEBI" id="CHEBI:58928"/>
    </ligand>
</feature>
<feature type="binding site" evidence="1">
    <location>
        <position position="320"/>
    </location>
    <ligand>
        <name>N-formimidoyl-L-glutamate</name>
        <dbReference type="ChEBI" id="CHEBI:58928"/>
    </ligand>
</feature>
<feature type="binding site" evidence="1">
    <location>
        <position position="321"/>
    </location>
    <ligand>
        <name>4-imidazolone-5-propanoate</name>
        <dbReference type="ChEBI" id="CHEBI:77893"/>
    </ligand>
</feature>
<organism>
    <name type="scientific">Aromatoleum aromaticum (strain DSM 19018 / LMG 30748 / EbN1)</name>
    <name type="common">Azoarcus sp. (strain EbN1)</name>
    <dbReference type="NCBI Taxonomy" id="76114"/>
    <lineage>
        <taxon>Bacteria</taxon>
        <taxon>Pseudomonadati</taxon>
        <taxon>Pseudomonadota</taxon>
        <taxon>Betaproteobacteria</taxon>
        <taxon>Rhodocyclales</taxon>
        <taxon>Rhodocyclaceae</taxon>
        <taxon>Aromatoleum</taxon>
    </lineage>
</organism>
<name>HUTI_AROAE</name>